<comment type="function">
    <text evidence="1">Gustducin-coupled receptor implicated in the perception of bitter compounds in the oral cavity and the gastrointestinal tract. Signals through PLCB2 and the calcium-regulated cation channel TRPM5 (By similarity). In airway epithelial cells, binding of denatonium increases the intracellular calcium ion concentration and stimulates ciliary beat frequency (By similarity).</text>
</comment>
<comment type="subcellular location">
    <subcellularLocation>
        <location>Membrane</location>
        <topology>Multi-pass membrane protein</topology>
    </subcellularLocation>
    <subcellularLocation>
        <location>Cell projection</location>
        <location>Cilium membrane</location>
    </subcellularLocation>
    <text evidence="1">In airway epithelial cells, localizes to motile cilia.</text>
</comment>
<comment type="miscellaneous">
    <text>Several bitter taste receptors are expressed in a single taste receptor cell.</text>
</comment>
<comment type="similarity">
    <text evidence="3">Belongs to the G-protein coupled receptor T2R family.</text>
</comment>
<feature type="chain" id="PRO_0000082208" description="Taste receptor type 2 member 4">
    <location>
        <begin position="1"/>
        <end position="299"/>
    </location>
</feature>
<feature type="topological domain" description="Extracellular" evidence="2">
    <location>
        <begin position="1"/>
        <end position="9"/>
    </location>
</feature>
<feature type="transmembrane region" description="Helical; Name=1" evidence="2">
    <location>
        <begin position="10"/>
        <end position="30"/>
    </location>
</feature>
<feature type="topological domain" description="Cytoplasmic" evidence="2">
    <location>
        <begin position="31"/>
        <end position="46"/>
    </location>
</feature>
<feature type="transmembrane region" description="Helical; Name=2" evidence="2">
    <location>
        <begin position="47"/>
        <end position="67"/>
    </location>
</feature>
<feature type="topological domain" description="Extracellular" evidence="2">
    <location>
        <begin position="68"/>
        <end position="81"/>
    </location>
</feature>
<feature type="transmembrane region" description="Helical; Name=3" evidence="2">
    <location>
        <begin position="82"/>
        <end position="102"/>
    </location>
</feature>
<feature type="topological domain" description="Cytoplasmic" evidence="2">
    <location>
        <begin position="103"/>
        <end position="131"/>
    </location>
</feature>
<feature type="transmembrane region" description="Helical; Name=4" evidence="2">
    <location>
        <begin position="132"/>
        <end position="152"/>
    </location>
</feature>
<feature type="topological domain" description="Extracellular" evidence="2">
    <location>
        <begin position="153"/>
        <end position="172"/>
    </location>
</feature>
<feature type="transmembrane region" description="Helical; Name=5" evidence="2">
    <location>
        <begin position="173"/>
        <end position="193"/>
    </location>
</feature>
<feature type="topological domain" description="Cytoplasmic" evidence="2">
    <location>
        <begin position="194"/>
        <end position="230"/>
    </location>
</feature>
<feature type="transmembrane region" description="Helical; Name=6" evidence="2">
    <location>
        <begin position="231"/>
        <end position="251"/>
    </location>
</feature>
<feature type="topological domain" description="Extracellular" evidence="2">
    <location>
        <begin position="252"/>
        <end position="262"/>
    </location>
</feature>
<feature type="transmembrane region" description="Helical; Name=7" evidence="2">
    <location>
        <begin position="263"/>
        <end position="283"/>
    </location>
</feature>
<feature type="topological domain" description="Cytoplasmic" evidence="2">
    <location>
        <begin position="284"/>
        <end position="299"/>
    </location>
</feature>
<feature type="glycosylation site" description="N-linked (GlcNAc...) asparagine" evidence="2">
    <location>
        <position position="164"/>
    </location>
</feature>
<feature type="glycosylation site" description="N-linked (GlcNAc...) asparagine" evidence="2">
    <location>
        <position position="165"/>
    </location>
</feature>
<feature type="glycosylation site" description="N-linked (GlcNAc...) asparagine" evidence="2">
    <location>
        <position position="169"/>
    </location>
</feature>
<protein>
    <recommendedName>
        <fullName>Taste receptor type 2 member 4</fullName>
        <shortName>T2R4</shortName>
    </recommendedName>
</protein>
<gene>
    <name type="primary">TAS2R4</name>
</gene>
<keyword id="KW-1003">Cell membrane</keyword>
<keyword id="KW-0966">Cell projection</keyword>
<keyword id="KW-0969">Cilium</keyword>
<keyword id="KW-0297">G-protein coupled receptor</keyword>
<keyword id="KW-0325">Glycoprotein</keyword>
<keyword id="KW-0472">Membrane</keyword>
<keyword id="KW-0675">Receptor</keyword>
<keyword id="KW-0716">Sensory transduction</keyword>
<keyword id="KW-0919">Taste</keyword>
<keyword id="KW-0807">Transducer</keyword>
<keyword id="KW-0812">Transmembrane</keyword>
<keyword id="KW-1133">Transmembrane helix</keyword>
<evidence type="ECO:0000250" key="1"/>
<evidence type="ECO:0000255" key="2"/>
<evidence type="ECO:0000305" key="3"/>
<accession>Q646F1</accession>
<proteinExistence type="inferred from homology"/>
<organism>
    <name type="scientific">Papio hamadryas</name>
    <name type="common">Hamadryas baboon</name>
    <dbReference type="NCBI Taxonomy" id="9557"/>
    <lineage>
        <taxon>Eukaryota</taxon>
        <taxon>Metazoa</taxon>
        <taxon>Chordata</taxon>
        <taxon>Craniata</taxon>
        <taxon>Vertebrata</taxon>
        <taxon>Euteleostomi</taxon>
        <taxon>Mammalia</taxon>
        <taxon>Eutheria</taxon>
        <taxon>Euarchontoglires</taxon>
        <taxon>Primates</taxon>
        <taxon>Haplorrhini</taxon>
        <taxon>Catarrhini</taxon>
        <taxon>Cercopithecidae</taxon>
        <taxon>Cercopithecinae</taxon>
        <taxon>Papio</taxon>
    </lineage>
</organism>
<sequence>MLWLFYSSAIIASVILDFVGIIMSLFITVVNYKTWVKSHRISSSERILFSLGITRFFMLALFLVNTIYFVSSNKERSVYLSAFFVLCFMFLDSSSLWFVTLLNSLYCVKITNFQHSVFLLLKRNISPKIPRLLPACVLISAFTTCLYITLSQASPFPELVTKRNNTSFNISEGILSLVVSFVLSSSLQFIINVTSASLLIYSLRRHIRKMQKNATGFWNPQTEAHVGAMKLMIYFLILYIPYSVATLVQYLPFYAGMDMGTKSICLIFATLYSPGHSVLIIITHPKLKTTAKKILCFKK</sequence>
<reference key="1">
    <citation type="journal article" date="2005" name="Mol. Biol. Evol.">
        <title>Evolution of bitter taste receptors in humans and apes.</title>
        <authorList>
            <person name="Fischer A."/>
            <person name="Gilad Y."/>
            <person name="Man O."/>
            <person name="Paeaebo S."/>
        </authorList>
    </citation>
    <scope>NUCLEOTIDE SEQUENCE [GENOMIC DNA]</scope>
</reference>
<name>TA2R4_PAPHA</name>
<dbReference type="EMBL" id="AY724833">
    <property type="protein sequence ID" value="AAU21068.1"/>
    <property type="molecule type" value="Genomic_DNA"/>
</dbReference>
<dbReference type="SMR" id="Q646F1"/>
<dbReference type="GlyCosmos" id="Q646F1">
    <property type="glycosylation" value="3 sites, No reported glycans"/>
</dbReference>
<dbReference type="GO" id="GO:0060170">
    <property type="term" value="C:ciliary membrane"/>
    <property type="evidence" value="ECO:0007669"/>
    <property type="project" value="UniProtKB-SubCell"/>
</dbReference>
<dbReference type="GO" id="GO:0033038">
    <property type="term" value="F:bitter taste receptor activity"/>
    <property type="evidence" value="ECO:0007669"/>
    <property type="project" value="InterPro"/>
</dbReference>
<dbReference type="GO" id="GO:0004930">
    <property type="term" value="F:G protein-coupled receptor activity"/>
    <property type="evidence" value="ECO:0007669"/>
    <property type="project" value="UniProtKB-KW"/>
</dbReference>
<dbReference type="CDD" id="cd15013">
    <property type="entry name" value="7tm_TAS2R4"/>
    <property type="match status" value="1"/>
</dbReference>
<dbReference type="FunFam" id="1.20.1070.10:FF:000055">
    <property type="entry name" value="Taste receptor type 2"/>
    <property type="match status" value="1"/>
</dbReference>
<dbReference type="Gene3D" id="1.20.1070.10">
    <property type="entry name" value="Rhodopsin 7-helix transmembrane proteins"/>
    <property type="match status" value="1"/>
</dbReference>
<dbReference type="InterPro" id="IPR007960">
    <property type="entry name" value="TAS2R"/>
</dbReference>
<dbReference type="InterPro" id="IPR030055">
    <property type="entry name" value="TAS2R4"/>
</dbReference>
<dbReference type="PANTHER" id="PTHR11394">
    <property type="entry name" value="TASTE RECEPTOR TYPE 2"/>
    <property type="match status" value="1"/>
</dbReference>
<dbReference type="PANTHER" id="PTHR11394:SF55">
    <property type="entry name" value="TASTE RECEPTOR TYPE 2 MEMBER 4"/>
    <property type="match status" value="1"/>
</dbReference>
<dbReference type="Pfam" id="PF05296">
    <property type="entry name" value="TAS2R"/>
    <property type="match status" value="1"/>
</dbReference>
<dbReference type="SUPFAM" id="SSF81321">
    <property type="entry name" value="Family A G protein-coupled receptor-like"/>
    <property type="match status" value="1"/>
</dbReference>